<gene>
    <name evidence="1" type="primary">hemC</name>
    <name type="ordered locus">YPK_4016</name>
</gene>
<comment type="function">
    <text evidence="1">Tetrapolymerization of the monopyrrole PBG into the hydroxymethylbilane pre-uroporphyrinogen in several discrete steps.</text>
</comment>
<comment type="catalytic activity">
    <reaction evidence="1">
        <text>4 porphobilinogen + H2O = hydroxymethylbilane + 4 NH4(+)</text>
        <dbReference type="Rhea" id="RHEA:13185"/>
        <dbReference type="ChEBI" id="CHEBI:15377"/>
        <dbReference type="ChEBI" id="CHEBI:28938"/>
        <dbReference type="ChEBI" id="CHEBI:57845"/>
        <dbReference type="ChEBI" id="CHEBI:58126"/>
        <dbReference type="EC" id="2.5.1.61"/>
    </reaction>
</comment>
<comment type="cofactor">
    <cofactor evidence="1">
        <name>dipyrromethane</name>
        <dbReference type="ChEBI" id="CHEBI:60342"/>
    </cofactor>
    <text evidence="1">Binds 1 dipyrromethane group covalently.</text>
</comment>
<comment type="pathway">
    <text evidence="1">Porphyrin-containing compound metabolism; protoporphyrin-IX biosynthesis; coproporphyrinogen-III from 5-aminolevulinate: step 2/4.</text>
</comment>
<comment type="subunit">
    <text evidence="1">Monomer.</text>
</comment>
<comment type="miscellaneous">
    <text evidence="1">The porphobilinogen subunits are added to the dipyrromethane group.</text>
</comment>
<comment type="similarity">
    <text evidence="1">Belongs to the HMBS family.</text>
</comment>
<keyword id="KW-0627">Porphyrin biosynthesis</keyword>
<keyword id="KW-0808">Transferase</keyword>
<name>HEM3_YERPY</name>
<dbReference type="EC" id="2.5.1.61" evidence="1"/>
<dbReference type="EMBL" id="CP000950">
    <property type="protein sequence ID" value="ACA70279.1"/>
    <property type="molecule type" value="Genomic_DNA"/>
</dbReference>
<dbReference type="RefSeq" id="WP_012304734.1">
    <property type="nucleotide sequence ID" value="NZ_CP009792.1"/>
</dbReference>
<dbReference type="SMR" id="B1JPE6"/>
<dbReference type="KEGG" id="ypy:YPK_4016"/>
<dbReference type="PATRIC" id="fig|502800.11.peg.366"/>
<dbReference type="UniPathway" id="UPA00251">
    <property type="reaction ID" value="UER00319"/>
</dbReference>
<dbReference type="GO" id="GO:0005737">
    <property type="term" value="C:cytoplasm"/>
    <property type="evidence" value="ECO:0007669"/>
    <property type="project" value="TreeGrafter"/>
</dbReference>
<dbReference type="GO" id="GO:0004418">
    <property type="term" value="F:hydroxymethylbilane synthase activity"/>
    <property type="evidence" value="ECO:0007669"/>
    <property type="project" value="UniProtKB-UniRule"/>
</dbReference>
<dbReference type="GO" id="GO:0006782">
    <property type="term" value="P:protoporphyrinogen IX biosynthetic process"/>
    <property type="evidence" value="ECO:0007669"/>
    <property type="project" value="UniProtKB-UniRule"/>
</dbReference>
<dbReference type="CDD" id="cd13646">
    <property type="entry name" value="PBP2_EcHMBS_like"/>
    <property type="match status" value="1"/>
</dbReference>
<dbReference type="FunFam" id="3.30.160.40:FF:000002">
    <property type="entry name" value="Porphobilinogen deaminase"/>
    <property type="match status" value="1"/>
</dbReference>
<dbReference type="FunFam" id="3.40.190.10:FF:000004">
    <property type="entry name" value="Porphobilinogen deaminase"/>
    <property type="match status" value="1"/>
</dbReference>
<dbReference type="FunFam" id="3.40.190.10:FF:000005">
    <property type="entry name" value="Porphobilinogen deaminase"/>
    <property type="match status" value="1"/>
</dbReference>
<dbReference type="Gene3D" id="3.40.190.10">
    <property type="entry name" value="Periplasmic binding protein-like II"/>
    <property type="match status" value="2"/>
</dbReference>
<dbReference type="Gene3D" id="3.30.160.40">
    <property type="entry name" value="Porphobilinogen deaminase, C-terminal domain"/>
    <property type="match status" value="1"/>
</dbReference>
<dbReference type="HAMAP" id="MF_00260">
    <property type="entry name" value="Porphobil_deam"/>
    <property type="match status" value="1"/>
</dbReference>
<dbReference type="InterPro" id="IPR000860">
    <property type="entry name" value="HemC"/>
</dbReference>
<dbReference type="InterPro" id="IPR022419">
    <property type="entry name" value="Porphobilin_deaminase_cofac_BS"/>
</dbReference>
<dbReference type="InterPro" id="IPR022417">
    <property type="entry name" value="Porphobilin_deaminase_N"/>
</dbReference>
<dbReference type="InterPro" id="IPR022418">
    <property type="entry name" value="Porphobilinogen_deaminase_C"/>
</dbReference>
<dbReference type="InterPro" id="IPR036803">
    <property type="entry name" value="Porphobilinogen_deaminase_C_sf"/>
</dbReference>
<dbReference type="NCBIfam" id="TIGR00212">
    <property type="entry name" value="hemC"/>
    <property type="match status" value="1"/>
</dbReference>
<dbReference type="PANTHER" id="PTHR11557">
    <property type="entry name" value="PORPHOBILINOGEN DEAMINASE"/>
    <property type="match status" value="1"/>
</dbReference>
<dbReference type="PANTHER" id="PTHR11557:SF0">
    <property type="entry name" value="PORPHOBILINOGEN DEAMINASE"/>
    <property type="match status" value="1"/>
</dbReference>
<dbReference type="Pfam" id="PF01379">
    <property type="entry name" value="Porphobil_deam"/>
    <property type="match status" value="1"/>
</dbReference>
<dbReference type="Pfam" id="PF03900">
    <property type="entry name" value="Porphobil_deamC"/>
    <property type="match status" value="1"/>
</dbReference>
<dbReference type="PIRSF" id="PIRSF001438">
    <property type="entry name" value="4pyrrol_synth_OHMeBilane_synth"/>
    <property type="match status" value="1"/>
</dbReference>
<dbReference type="PRINTS" id="PR00151">
    <property type="entry name" value="PORPHBDMNASE"/>
</dbReference>
<dbReference type="SUPFAM" id="SSF53850">
    <property type="entry name" value="Periplasmic binding protein-like II"/>
    <property type="match status" value="1"/>
</dbReference>
<dbReference type="SUPFAM" id="SSF54782">
    <property type="entry name" value="Porphobilinogen deaminase (hydroxymethylbilane synthase), C-terminal domain"/>
    <property type="match status" value="1"/>
</dbReference>
<dbReference type="PROSITE" id="PS00533">
    <property type="entry name" value="PORPHOBILINOGEN_DEAM"/>
    <property type="match status" value="1"/>
</dbReference>
<proteinExistence type="inferred from homology"/>
<feature type="chain" id="PRO_1000114190" description="Porphobilinogen deaminase">
    <location>
        <begin position="1"/>
        <end position="313"/>
    </location>
</feature>
<feature type="modified residue" description="S-(dipyrrolylmethanemethyl)cysteine" evidence="1">
    <location>
        <position position="242"/>
    </location>
</feature>
<sequence>MLDKIIRIATRQSPLALWQAHYVQHLLQANHPGLQIELVPMVTRGDIILDTPLAKVGGKGLFVKELELALLDGRADIAVHSMKDVPIAFPEGLGLVTICEREDPRDAFVSSHYTHLDDLPAGSVVGTSSLRRQCQLRERRPDLIIRDLRGNVGTRLAKLDNGDYQAIILAVAGLKRLGLENRIRYAMSAEESLPAVGQGAVGIECRLDDGHTRQLLAPLNHRHTELRVCAERAMNIRLEGGCQVPIGSYAELEGDTLWLRALVGAPDGSQMIRGERRGPAAEAEQMGIELADELLSRGAREILAAVYLDNPAR</sequence>
<protein>
    <recommendedName>
        <fullName evidence="1">Porphobilinogen deaminase</fullName>
        <shortName evidence="1">PBG</shortName>
        <ecNumber evidence="1">2.5.1.61</ecNumber>
    </recommendedName>
    <alternativeName>
        <fullName evidence="1">Hydroxymethylbilane synthase</fullName>
        <shortName evidence="1">HMBS</shortName>
    </alternativeName>
    <alternativeName>
        <fullName evidence="1">Pre-uroporphyrinogen synthase</fullName>
    </alternativeName>
</protein>
<reference key="1">
    <citation type="submission" date="2008-02" db="EMBL/GenBank/DDBJ databases">
        <title>Complete sequence of Yersinia pseudotuberculosis YPIII.</title>
        <authorList>
            <consortium name="US DOE Joint Genome Institute"/>
            <person name="Copeland A."/>
            <person name="Lucas S."/>
            <person name="Lapidus A."/>
            <person name="Glavina del Rio T."/>
            <person name="Dalin E."/>
            <person name="Tice H."/>
            <person name="Bruce D."/>
            <person name="Goodwin L."/>
            <person name="Pitluck S."/>
            <person name="Munk A.C."/>
            <person name="Brettin T."/>
            <person name="Detter J.C."/>
            <person name="Han C."/>
            <person name="Tapia R."/>
            <person name="Schmutz J."/>
            <person name="Larimer F."/>
            <person name="Land M."/>
            <person name="Hauser L."/>
            <person name="Challacombe J.F."/>
            <person name="Green L."/>
            <person name="Lindler L.E."/>
            <person name="Nikolich M.P."/>
            <person name="Richardson P."/>
        </authorList>
    </citation>
    <scope>NUCLEOTIDE SEQUENCE [LARGE SCALE GENOMIC DNA]</scope>
    <source>
        <strain>YPIII</strain>
    </source>
</reference>
<accession>B1JPE6</accession>
<organism>
    <name type="scientific">Yersinia pseudotuberculosis serotype O:3 (strain YPIII)</name>
    <dbReference type="NCBI Taxonomy" id="502800"/>
    <lineage>
        <taxon>Bacteria</taxon>
        <taxon>Pseudomonadati</taxon>
        <taxon>Pseudomonadota</taxon>
        <taxon>Gammaproteobacteria</taxon>
        <taxon>Enterobacterales</taxon>
        <taxon>Yersiniaceae</taxon>
        <taxon>Yersinia</taxon>
    </lineage>
</organism>
<evidence type="ECO:0000255" key="1">
    <source>
        <dbReference type="HAMAP-Rule" id="MF_00260"/>
    </source>
</evidence>